<dbReference type="EC" id="3.1.1.96" evidence="1"/>
<dbReference type="EMBL" id="CP000713">
    <property type="protein sequence ID" value="ABQ95034.1"/>
    <property type="molecule type" value="Genomic_DNA"/>
</dbReference>
<dbReference type="SMR" id="A5WH93"/>
<dbReference type="STRING" id="349106.PsycPRwf_2094"/>
<dbReference type="KEGG" id="prw:PsycPRwf_2094"/>
<dbReference type="eggNOG" id="COG1490">
    <property type="taxonomic scope" value="Bacteria"/>
</dbReference>
<dbReference type="HOGENOM" id="CLU_076901_1_1_6"/>
<dbReference type="GO" id="GO:0005737">
    <property type="term" value="C:cytoplasm"/>
    <property type="evidence" value="ECO:0007669"/>
    <property type="project" value="UniProtKB-SubCell"/>
</dbReference>
<dbReference type="GO" id="GO:0051500">
    <property type="term" value="F:D-tyrosyl-tRNA(Tyr) deacylase activity"/>
    <property type="evidence" value="ECO:0007669"/>
    <property type="project" value="TreeGrafter"/>
</dbReference>
<dbReference type="GO" id="GO:0106026">
    <property type="term" value="F:Gly-tRNA(Ala) deacylase activity"/>
    <property type="evidence" value="ECO:0007669"/>
    <property type="project" value="UniProtKB-UniRule"/>
</dbReference>
<dbReference type="GO" id="GO:0043908">
    <property type="term" value="F:Ser(Gly)-tRNA(Ala) hydrolase activity"/>
    <property type="evidence" value="ECO:0007669"/>
    <property type="project" value="UniProtKB-UniRule"/>
</dbReference>
<dbReference type="GO" id="GO:0000049">
    <property type="term" value="F:tRNA binding"/>
    <property type="evidence" value="ECO:0007669"/>
    <property type="project" value="UniProtKB-UniRule"/>
</dbReference>
<dbReference type="GO" id="GO:0019478">
    <property type="term" value="P:D-amino acid catabolic process"/>
    <property type="evidence" value="ECO:0007669"/>
    <property type="project" value="UniProtKB-UniRule"/>
</dbReference>
<dbReference type="FunFam" id="3.50.80.10:FF:000001">
    <property type="entry name" value="D-aminoacyl-tRNA deacylase"/>
    <property type="match status" value="1"/>
</dbReference>
<dbReference type="Gene3D" id="3.50.80.10">
    <property type="entry name" value="D-tyrosyl-tRNA(Tyr) deacylase"/>
    <property type="match status" value="1"/>
</dbReference>
<dbReference type="HAMAP" id="MF_00518">
    <property type="entry name" value="Deacylase_Dtd"/>
    <property type="match status" value="1"/>
</dbReference>
<dbReference type="InterPro" id="IPR003732">
    <property type="entry name" value="Daa-tRNA_deacyls_DTD"/>
</dbReference>
<dbReference type="InterPro" id="IPR023509">
    <property type="entry name" value="DTD-like_sf"/>
</dbReference>
<dbReference type="NCBIfam" id="TIGR00256">
    <property type="entry name" value="D-aminoacyl-tRNA deacylase"/>
    <property type="match status" value="1"/>
</dbReference>
<dbReference type="PANTHER" id="PTHR10472:SF5">
    <property type="entry name" value="D-AMINOACYL-TRNA DEACYLASE 1"/>
    <property type="match status" value="1"/>
</dbReference>
<dbReference type="PANTHER" id="PTHR10472">
    <property type="entry name" value="D-TYROSYL-TRNA TYR DEACYLASE"/>
    <property type="match status" value="1"/>
</dbReference>
<dbReference type="Pfam" id="PF02580">
    <property type="entry name" value="Tyr_Deacylase"/>
    <property type="match status" value="1"/>
</dbReference>
<dbReference type="SUPFAM" id="SSF69500">
    <property type="entry name" value="DTD-like"/>
    <property type="match status" value="1"/>
</dbReference>
<gene>
    <name evidence="1" type="primary">dtd</name>
    <name type="ordered locus">PsycPRwf_2094</name>
</gene>
<comment type="function">
    <text evidence="1">An aminoacyl-tRNA editing enzyme that deacylates mischarged D-aminoacyl-tRNAs. Also deacylates mischarged glycyl-tRNA(Ala), protecting cells against glycine mischarging by AlaRS. Acts via tRNA-based rather than protein-based catalysis; rejects L-amino acids rather than detecting D-amino acids in the active site. By recycling D-aminoacyl-tRNA to D-amino acids and free tRNA molecules, this enzyme counteracts the toxicity associated with the formation of D-aminoacyl-tRNA entities in vivo and helps enforce protein L-homochirality.</text>
</comment>
<comment type="catalytic activity">
    <reaction evidence="1">
        <text>glycyl-tRNA(Ala) + H2O = tRNA(Ala) + glycine + H(+)</text>
        <dbReference type="Rhea" id="RHEA:53744"/>
        <dbReference type="Rhea" id="RHEA-COMP:9657"/>
        <dbReference type="Rhea" id="RHEA-COMP:13640"/>
        <dbReference type="ChEBI" id="CHEBI:15377"/>
        <dbReference type="ChEBI" id="CHEBI:15378"/>
        <dbReference type="ChEBI" id="CHEBI:57305"/>
        <dbReference type="ChEBI" id="CHEBI:78442"/>
        <dbReference type="ChEBI" id="CHEBI:78522"/>
        <dbReference type="EC" id="3.1.1.96"/>
    </reaction>
</comment>
<comment type="catalytic activity">
    <reaction evidence="1">
        <text>a D-aminoacyl-tRNA + H2O = a tRNA + a D-alpha-amino acid + H(+)</text>
        <dbReference type="Rhea" id="RHEA:13953"/>
        <dbReference type="Rhea" id="RHEA-COMP:10123"/>
        <dbReference type="Rhea" id="RHEA-COMP:10124"/>
        <dbReference type="ChEBI" id="CHEBI:15377"/>
        <dbReference type="ChEBI" id="CHEBI:15378"/>
        <dbReference type="ChEBI" id="CHEBI:59871"/>
        <dbReference type="ChEBI" id="CHEBI:78442"/>
        <dbReference type="ChEBI" id="CHEBI:79333"/>
        <dbReference type="EC" id="3.1.1.96"/>
    </reaction>
</comment>
<comment type="subunit">
    <text evidence="1">Homodimer.</text>
</comment>
<comment type="subcellular location">
    <subcellularLocation>
        <location evidence="1">Cytoplasm</location>
    </subcellularLocation>
</comment>
<comment type="domain">
    <text evidence="1">A Gly-cisPro motif from one monomer fits into the active site of the other monomer to allow specific chiral rejection of L-amino acids.</text>
</comment>
<comment type="similarity">
    <text evidence="1">Belongs to the DTD family.</text>
</comment>
<protein>
    <recommendedName>
        <fullName evidence="1">D-aminoacyl-tRNA deacylase</fullName>
        <shortName evidence="1">DTD</shortName>
        <ecNumber evidence="1">3.1.1.96</ecNumber>
    </recommendedName>
    <alternativeName>
        <fullName evidence="1">Gly-tRNA(Ala) deacylase</fullName>
    </alternativeName>
</protein>
<keyword id="KW-0963">Cytoplasm</keyword>
<keyword id="KW-0378">Hydrolase</keyword>
<keyword id="KW-0694">RNA-binding</keyword>
<keyword id="KW-0820">tRNA-binding</keyword>
<evidence type="ECO:0000255" key="1">
    <source>
        <dbReference type="HAMAP-Rule" id="MF_00518"/>
    </source>
</evidence>
<accession>A5WH93</accession>
<organism>
    <name type="scientific">Psychrobacter sp. (strain PRwf-1)</name>
    <dbReference type="NCBI Taxonomy" id="349106"/>
    <lineage>
        <taxon>Bacteria</taxon>
        <taxon>Pseudomonadati</taxon>
        <taxon>Pseudomonadota</taxon>
        <taxon>Gammaproteobacteria</taxon>
        <taxon>Moraxellales</taxon>
        <taxon>Moraxellaceae</taxon>
        <taxon>Psychrobacter</taxon>
    </lineage>
</organism>
<feature type="chain" id="PRO_1000127564" description="D-aminoacyl-tRNA deacylase">
    <location>
        <begin position="1"/>
        <end position="146"/>
    </location>
</feature>
<feature type="short sequence motif" description="Gly-cisPro motif, important for rejection of L-amino acids" evidence="1">
    <location>
        <begin position="137"/>
        <end position="138"/>
    </location>
</feature>
<reference key="1">
    <citation type="submission" date="2007-05" db="EMBL/GenBank/DDBJ databases">
        <title>Complete sequence of chromosome of Psychrobacter sp. PRwf-1.</title>
        <authorList>
            <consortium name="US DOE Joint Genome Institute"/>
            <person name="Copeland A."/>
            <person name="Lucas S."/>
            <person name="Lapidus A."/>
            <person name="Barry K."/>
            <person name="Detter J.C."/>
            <person name="Glavina del Rio T."/>
            <person name="Hammon N."/>
            <person name="Israni S."/>
            <person name="Dalin E."/>
            <person name="Tice H."/>
            <person name="Pitluck S."/>
            <person name="Chain P."/>
            <person name="Malfatti S."/>
            <person name="Shin M."/>
            <person name="Vergez L."/>
            <person name="Schmutz J."/>
            <person name="Larimer F."/>
            <person name="Land M."/>
            <person name="Hauser L."/>
            <person name="Kyrpides N."/>
            <person name="Kim E."/>
            <person name="Tiedje J."/>
            <person name="Richardson P."/>
        </authorList>
    </citation>
    <scope>NUCLEOTIDE SEQUENCE [LARGE SCALE GENOMIC DNA]</scope>
    <source>
        <strain>PRwf-1</strain>
    </source>
</reference>
<name>DTD_PSYWF</name>
<sequence length="146" mass="15881">MKALIQRVSAASVRVDNQIVGQIEQGILAYIGLGPEDTLKSAQKMIDKILGYRIFDNDAGKLDKNVQQVAGGLLLVSQFTLMAKTDKGRRPDFGGAMPPAQASELFKQMIDYAKQQHDKVATGEFGANMLVQADNDGPLNFILEIS</sequence>
<proteinExistence type="inferred from homology"/>